<gene>
    <name type="primary">Gcsam</name>
    <name type="synonym">Gcet</name>
    <name type="synonym">Gcet2</name>
    <name type="synonym">M17</name>
</gene>
<name>GCSAM_MOUSE</name>
<accession>Q6RFH4</accession>
<accession>Q60691</accession>
<accession>Q8CB90</accession>
<dbReference type="EMBL" id="U13263">
    <property type="protein sequence ID" value="AAA96821.1"/>
    <property type="molecule type" value="mRNA"/>
</dbReference>
<dbReference type="EMBL" id="AY500830">
    <property type="protein sequence ID" value="AAR89181.1"/>
    <property type="molecule type" value="mRNA"/>
</dbReference>
<dbReference type="EMBL" id="AK036553">
    <property type="protein sequence ID" value="BAC29474.1"/>
    <property type="molecule type" value="mRNA"/>
</dbReference>
<dbReference type="EMBL" id="BC099585">
    <property type="protein sequence ID" value="AAH99585.1"/>
    <property type="molecule type" value="mRNA"/>
</dbReference>
<dbReference type="CCDS" id="CCDS28199.1">
    <molecule id="Q6RFH4-2"/>
</dbReference>
<dbReference type="CCDS" id="CCDS49861.1">
    <molecule id="Q6RFH4-1"/>
</dbReference>
<dbReference type="RefSeq" id="NP_001152769.1">
    <molecule id="Q6RFH4-1"/>
    <property type="nucleotide sequence ID" value="NM_001159297.1"/>
</dbReference>
<dbReference type="RefSeq" id="NP_032125.3">
    <molecule id="Q6RFH4-2"/>
    <property type="nucleotide sequence ID" value="NM_008099.4"/>
</dbReference>
<dbReference type="FunCoup" id="Q6RFH4">
    <property type="interactions" value="9"/>
</dbReference>
<dbReference type="STRING" id="10090.ENSMUSP00000123853"/>
<dbReference type="iPTMnet" id="Q6RFH4"/>
<dbReference type="PhosphoSitePlus" id="Q6RFH4"/>
<dbReference type="PaxDb" id="10090-ENSMUSP00000123853"/>
<dbReference type="ProteomicsDB" id="271202">
    <molecule id="Q6RFH4-1"/>
</dbReference>
<dbReference type="ProteomicsDB" id="271203">
    <molecule id="Q6RFH4-2"/>
</dbReference>
<dbReference type="Antibodypedia" id="1196">
    <property type="antibodies" value="202 antibodies from 32 providers"/>
</dbReference>
<dbReference type="DNASU" id="14525"/>
<dbReference type="Ensembl" id="ENSMUST00000023339.5">
    <molecule id="Q6RFH4-2"/>
    <property type="protein sequence ID" value="ENSMUSP00000023339.5"/>
    <property type="gene ID" value="ENSMUSG00000022659.14"/>
</dbReference>
<dbReference type="Ensembl" id="ENSMUST00000161347.9">
    <molecule id="Q6RFH4-1"/>
    <property type="protein sequence ID" value="ENSMUSP00000123853.2"/>
    <property type="gene ID" value="ENSMUSG00000022659.14"/>
</dbReference>
<dbReference type="GeneID" id="14525"/>
<dbReference type="KEGG" id="mmu:14525"/>
<dbReference type="UCSC" id="uc007zir.2">
    <molecule id="Q6RFH4-2"/>
    <property type="organism name" value="mouse"/>
</dbReference>
<dbReference type="UCSC" id="uc007zis.2">
    <molecule id="Q6RFH4-1"/>
    <property type="organism name" value="mouse"/>
</dbReference>
<dbReference type="AGR" id="MGI:102969"/>
<dbReference type="CTD" id="257144"/>
<dbReference type="MGI" id="MGI:102969">
    <property type="gene designation" value="Gcsam"/>
</dbReference>
<dbReference type="VEuPathDB" id="HostDB:ENSMUSG00000022659"/>
<dbReference type="eggNOG" id="ENOG502TDUK">
    <property type="taxonomic scope" value="Eukaryota"/>
</dbReference>
<dbReference type="GeneTree" id="ENSGT00940000158134"/>
<dbReference type="HOGENOM" id="CLU_126867_0_0_1"/>
<dbReference type="InParanoid" id="Q6RFH4"/>
<dbReference type="OMA" id="RCWDCHI"/>
<dbReference type="OrthoDB" id="9829486at2759"/>
<dbReference type="PhylomeDB" id="Q6RFH4"/>
<dbReference type="TreeFam" id="TF338596"/>
<dbReference type="BioGRID-ORCS" id="14525">
    <property type="hits" value="1 hit in 112 CRISPR screens"/>
</dbReference>
<dbReference type="ChiTaRS" id="Gcsam">
    <property type="organism name" value="mouse"/>
</dbReference>
<dbReference type="PRO" id="PR:Q6RFH4"/>
<dbReference type="Proteomes" id="UP000000589">
    <property type="component" value="Chromosome 16"/>
</dbReference>
<dbReference type="RNAct" id="Q6RFH4">
    <property type="molecule type" value="protein"/>
</dbReference>
<dbReference type="Bgee" id="ENSMUSG00000022659">
    <property type="expression patterns" value="Expressed in spermatocyte and 39 other cell types or tissues"/>
</dbReference>
<dbReference type="GO" id="GO:0005737">
    <property type="term" value="C:cytoplasm"/>
    <property type="evidence" value="ECO:0007669"/>
    <property type="project" value="UniProtKB-SubCell"/>
</dbReference>
<dbReference type="GO" id="GO:0005886">
    <property type="term" value="C:plasma membrane"/>
    <property type="evidence" value="ECO:0007669"/>
    <property type="project" value="UniProtKB-SubCell"/>
</dbReference>
<dbReference type="GO" id="GO:0003779">
    <property type="term" value="F:actin binding"/>
    <property type="evidence" value="ECO:0007669"/>
    <property type="project" value="Ensembl"/>
</dbReference>
<dbReference type="GO" id="GO:0045159">
    <property type="term" value="F:myosin II binding"/>
    <property type="evidence" value="ECO:0007669"/>
    <property type="project" value="Ensembl"/>
</dbReference>
<dbReference type="GO" id="GO:0019901">
    <property type="term" value="F:protein kinase binding"/>
    <property type="evidence" value="ECO:0007669"/>
    <property type="project" value="Ensembl"/>
</dbReference>
<dbReference type="GO" id="GO:2000402">
    <property type="term" value="P:negative regulation of lymphocyte migration"/>
    <property type="evidence" value="ECO:0007669"/>
    <property type="project" value="Ensembl"/>
</dbReference>
<dbReference type="GO" id="GO:0050855">
    <property type="term" value="P:regulation of B cell receptor signaling pathway"/>
    <property type="evidence" value="ECO:0007669"/>
    <property type="project" value="Ensembl"/>
</dbReference>
<dbReference type="InterPro" id="IPR031364">
    <property type="entry name" value="GC_assoc_lym"/>
</dbReference>
<dbReference type="PANTHER" id="PTHR35351:SF2">
    <property type="entry name" value="GERMINAL CENTER-ASSOCIATED SIGNALING AND MOTILITY PROTEIN"/>
    <property type="match status" value="1"/>
</dbReference>
<dbReference type="PANTHER" id="PTHR35351">
    <property type="entry name" value="GERMINAL CENTER-ASSOCIATED SIGNALING AND MOTILITY-LIKE PROTEIN"/>
    <property type="match status" value="1"/>
</dbReference>
<dbReference type="Pfam" id="PF15666">
    <property type="entry name" value="HGAL"/>
    <property type="match status" value="1"/>
</dbReference>
<sequence length="181" mass="20988">MGNCLQRTTRWQLDMQETPWNLRLSAKGRTCRYFRGWSCCHSVEGCSCLPWKNIRTFKARQESPKQNEGMTSAPVQDNANETYTEELCYILVDHEAVRGRPSVNPAEGFYENISNKAERHKESSRGTETEYSVLRFPSPPQPLPSTDDEYELLMPSRFSSHAFQQPRPLTTPYETHFSYPQ</sequence>
<evidence type="ECO:0000250" key="1"/>
<evidence type="ECO:0000250" key="2">
    <source>
        <dbReference type="UniProtKB" id="Q8N6F7"/>
    </source>
</evidence>
<evidence type="ECO:0000256" key="3">
    <source>
        <dbReference type="SAM" id="MobiDB-lite"/>
    </source>
</evidence>
<evidence type="ECO:0000269" key="4">
    <source>
    </source>
</evidence>
<evidence type="ECO:0000269" key="5">
    <source ref="2"/>
</evidence>
<evidence type="ECO:0000303" key="6">
    <source>
    </source>
</evidence>
<evidence type="ECO:0000303" key="7">
    <source>
    </source>
</evidence>
<evidence type="ECO:0000303" key="8">
    <source>
    </source>
</evidence>
<evidence type="ECO:0000305" key="9"/>
<evidence type="ECO:0007744" key="10">
    <source>
    </source>
</evidence>
<keyword id="KW-0025">Alternative splicing</keyword>
<keyword id="KW-1003">Cell membrane</keyword>
<keyword id="KW-0963">Cytoplasm</keyword>
<keyword id="KW-0472">Membrane</keyword>
<keyword id="KW-0597">Phosphoprotein</keyword>
<keyword id="KW-1185">Reference proteome</keyword>
<keyword id="KW-0832">Ubl conjugation</keyword>
<comment type="function">
    <text evidence="1">Involved in the negative regulation of lymphocyte motility. It mediates the migration-inhibitory effects of IL6. Serves as a positive regulator of the RhoA signaling pathway. Enhancement of RhoA activation results in inhibition of lymphocyte and lymphoma cell motility by activation of its downstream effector ROCK. Is a regulator of B-cell receptor signaling, that acts through SYK kinase activation.</text>
</comment>
<comment type="subunit">
    <text evidence="1">Interacts with ACTB and MYH2; the interaction with MYH2 is increased by IL6-induced phosphorylation. Interacts (via C-terminus) with ARHGEF11 (via DH domain). Interacts with ARHGEF12. Interacts with SYK; the interaction increases after B-cell receptor stimulation, resulting in enhanced SYK autophosphorylation and activity.</text>
</comment>
<comment type="subcellular location">
    <subcellularLocation>
        <location evidence="1">Cytoplasm</location>
    </subcellularLocation>
    <subcellularLocation>
        <location evidence="2">Cell membrane</location>
    </subcellularLocation>
    <text evidence="1">It relocalizes from the cytoplasm to podosome-like structures upon cell treatment with IL6.</text>
</comment>
<comment type="alternative products">
    <event type="alternative splicing"/>
    <isoform>
        <id>Q6RFH4-1</id>
        <name>1</name>
        <name>M17-L</name>
        <sequence type="displayed"/>
    </isoform>
    <isoform>
        <id>Q6RFH4-2</id>
        <name>2</name>
        <sequence type="described" ref="VSP_021334"/>
    </isoform>
</comment>
<comment type="tissue specificity">
    <text evidence="4 5">Highly expressed in normal germinal center (GC) B-cells. Expressed in spleen and, to a lesser extent, bone marrow.</text>
</comment>
<comment type="PTM">
    <text evidence="1">Phosphorylation on tyrosine residues can be induced by IL6. Phosphorylation is mediated by LYN.</text>
</comment>
<comment type="PTM">
    <text evidence="2">Targeted by the ubiquitin E3 ligase subunit FBXO10 to mediate its ubiquitination and degradation.</text>
</comment>
<comment type="miscellaneous">
    <text>GCSAM transgenic mice develop B-cell lymphoid hyperplasia, hypergammaglobulinemia and systemic reactive amyloid A (AA) amyloidosis strating from 12 months of age.</text>
</comment>
<organism>
    <name type="scientific">Mus musculus</name>
    <name type="common">Mouse</name>
    <dbReference type="NCBI Taxonomy" id="10090"/>
    <lineage>
        <taxon>Eukaryota</taxon>
        <taxon>Metazoa</taxon>
        <taxon>Chordata</taxon>
        <taxon>Craniata</taxon>
        <taxon>Vertebrata</taxon>
        <taxon>Euteleostomi</taxon>
        <taxon>Mammalia</taxon>
        <taxon>Eutheria</taxon>
        <taxon>Euarchontoglires</taxon>
        <taxon>Glires</taxon>
        <taxon>Rodentia</taxon>
        <taxon>Myomorpha</taxon>
        <taxon>Muroidea</taxon>
        <taxon>Muridae</taxon>
        <taxon>Murinae</taxon>
        <taxon>Mus</taxon>
        <taxon>Mus</taxon>
    </lineage>
</organism>
<reference key="1">
    <citation type="journal article" date="1994" name="Int. Immunol.">
        <title>M17: a novel gene expressed in germinal centers.</title>
        <authorList>
            <person name="Christoph T."/>
            <person name="Rickert R."/>
            <person name="Rajewsky K."/>
        </authorList>
    </citation>
    <scope>NUCLEOTIDE SEQUENCE [MRNA] (ISOFORM 2)</scope>
    <scope>TISSUE SPECIFICITY</scope>
    <source>
        <strain>C57BL/6J</strain>
    </source>
</reference>
<reference key="2">
    <citation type="submission" date="2003-12" db="EMBL/GenBank/DDBJ databases">
        <title>Cloning of mouse M17 gene longer isoform, M17-L.</title>
        <authorList>
            <person name="Pan Z."/>
            <person name="Shen Y."/>
            <person name="Du C."/>
            <person name="Chan J."/>
        </authorList>
    </citation>
    <scope>NUCLEOTIDE SEQUENCE [MRNA] (ISOFORM 1)</scope>
    <scope>TISSUE SPECIFICITY</scope>
    <source>
        <tissue>Spleen</tissue>
    </source>
</reference>
<reference key="3">
    <citation type="journal article" date="2005" name="Science">
        <title>The transcriptional landscape of the mammalian genome.</title>
        <authorList>
            <person name="Carninci P."/>
            <person name="Kasukawa T."/>
            <person name="Katayama S."/>
            <person name="Gough J."/>
            <person name="Frith M.C."/>
            <person name="Maeda N."/>
            <person name="Oyama R."/>
            <person name="Ravasi T."/>
            <person name="Lenhard B."/>
            <person name="Wells C."/>
            <person name="Kodzius R."/>
            <person name="Shimokawa K."/>
            <person name="Bajic V.B."/>
            <person name="Brenner S.E."/>
            <person name="Batalov S."/>
            <person name="Forrest A.R."/>
            <person name="Zavolan M."/>
            <person name="Davis M.J."/>
            <person name="Wilming L.G."/>
            <person name="Aidinis V."/>
            <person name="Allen J.E."/>
            <person name="Ambesi-Impiombato A."/>
            <person name="Apweiler R."/>
            <person name="Aturaliya R.N."/>
            <person name="Bailey T.L."/>
            <person name="Bansal M."/>
            <person name="Baxter L."/>
            <person name="Beisel K.W."/>
            <person name="Bersano T."/>
            <person name="Bono H."/>
            <person name="Chalk A.M."/>
            <person name="Chiu K.P."/>
            <person name="Choudhary V."/>
            <person name="Christoffels A."/>
            <person name="Clutterbuck D.R."/>
            <person name="Crowe M.L."/>
            <person name="Dalla E."/>
            <person name="Dalrymple B.P."/>
            <person name="de Bono B."/>
            <person name="Della Gatta G."/>
            <person name="di Bernardo D."/>
            <person name="Down T."/>
            <person name="Engstrom P."/>
            <person name="Fagiolini M."/>
            <person name="Faulkner G."/>
            <person name="Fletcher C.F."/>
            <person name="Fukushima T."/>
            <person name="Furuno M."/>
            <person name="Futaki S."/>
            <person name="Gariboldi M."/>
            <person name="Georgii-Hemming P."/>
            <person name="Gingeras T.R."/>
            <person name="Gojobori T."/>
            <person name="Green R.E."/>
            <person name="Gustincich S."/>
            <person name="Harbers M."/>
            <person name="Hayashi Y."/>
            <person name="Hensch T.K."/>
            <person name="Hirokawa N."/>
            <person name="Hill D."/>
            <person name="Huminiecki L."/>
            <person name="Iacono M."/>
            <person name="Ikeo K."/>
            <person name="Iwama A."/>
            <person name="Ishikawa T."/>
            <person name="Jakt M."/>
            <person name="Kanapin A."/>
            <person name="Katoh M."/>
            <person name="Kawasawa Y."/>
            <person name="Kelso J."/>
            <person name="Kitamura H."/>
            <person name="Kitano H."/>
            <person name="Kollias G."/>
            <person name="Krishnan S.P."/>
            <person name="Kruger A."/>
            <person name="Kummerfeld S.K."/>
            <person name="Kurochkin I.V."/>
            <person name="Lareau L.F."/>
            <person name="Lazarevic D."/>
            <person name="Lipovich L."/>
            <person name="Liu J."/>
            <person name="Liuni S."/>
            <person name="McWilliam S."/>
            <person name="Madan Babu M."/>
            <person name="Madera M."/>
            <person name="Marchionni L."/>
            <person name="Matsuda H."/>
            <person name="Matsuzawa S."/>
            <person name="Miki H."/>
            <person name="Mignone F."/>
            <person name="Miyake S."/>
            <person name="Morris K."/>
            <person name="Mottagui-Tabar S."/>
            <person name="Mulder N."/>
            <person name="Nakano N."/>
            <person name="Nakauchi H."/>
            <person name="Ng P."/>
            <person name="Nilsson R."/>
            <person name="Nishiguchi S."/>
            <person name="Nishikawa S."/>
            <person name="Nori F."/>
            <person name="Ohara O."/>
            <person name="Okazaki Y."/>
            <person name="Orlando V."/>
            <person name="Pang K.C."/>
            <person name="Pavan W.J."/>
            <person name="Pavesi G."/>
            <person name="Pesole G."/>
            <person name="Petrovsky N."/>
            <person name="Piazza S."/>
            <person name="Reed J."/>
            <person name="Reid J.F."/>
            <person name="Ring B.Z."/>
            <person name="Ringwald M."/>
            <person name="Rost B."/>
            <person name="Ruan Y."/>
            <person name="Salzberg S.L."/>
            <person name="Sandelin A."/>
            <person name="Schneider C."/>
            <person name="Schoenbach C."/>
            <person name="Sekiguchi K."/>
            <person name="Semple C.A."/>
            <person name="Seno S."/>
            <person name="Sessa L."/>
            <person name="Sheng Y."/>
            <person name="Shibata Y."/>
            <person name="Shimada H."/>
            <person name="Shimada K."/>
            <person name="Silva D."/>
            <person name="Sinclair B."/>
            <person name="Sperling S."/>
            <person name="Stupka E."/>
            <person name="Sugiura K."/>
            <person name="Sultana R."/>
            <person name="Takenaka Y."/>
            <person name="Taki K."/>
            <person name="Tammoja K."/>
            <person name="Tan S.L."/>
            <person name="Tang S."/>
            <person name="Taylor M.S."/>
            <person name="Tegner J."/>
            <person name="Teichmann S.A."/>
            <person name="Ueda H.R."/>
            <person name="van Nimwegen E."/>
            <person name="Verardo R."/>
            <person name="Wei C.L."/>
            <person name="Yagi K."/>
            <person name="Yamanishi H."/>
            <person name="Zabarovsky E."/>
            <person name="Zhu S."/>
            <person name="Zimmer A."/>
            <person name="Hide W."/>
            <person name="Bult C."/>
            <person name="Grimmond S.M."/>
            <person name="Teasdale R.D."/>
            <person name="Liu E.T."/>
            <person name="Brusic V."/>
            <person name="Quackenbush J."/>
            <person name="Wahlestedt C."/>
            <person name="Mattick J.S."/>
            <person name="Hume D.A."/>
            <person name="Kai C."/>
            <person name="Sasaki D."/>
            <person name="Tomaru Y."/>
            <person name="Fukuda S."/>
            <person name="Kanamori-Katayama M."/>
            <person name="Suzuki M."/>
            <person name="Aoki J."/>
            <person name="Arakawa T."/>
            <person name="Iida J."/>
            <person name="Imamura K."/>
            <person name="Itoh M."/>
            <person name="Kato T."/>
            <person name="Kawaji H."/>
            <person name="Kawagashira N."/>
            <person name="Kawashima T."/>
            <person name="Kojima M."/>
            <person name="Kondo S."/>
            <person name="Konno H."/>
            <person name="Nakano K."/>
            <person name="Ninomiya N."/>
            <person name="Nishio T."/>
            <person name="Okada M."/>
            <person name="Plessy C."/>
            <person name="Shibata K."/>
            <person name="Shiraki T."/>
            <person name="Suzuki S."/>
            <person name="Tagami M."/>
            <person name="Waki K."/>
            <person name="Watahiki A."/>
            <person name="Okamura-Oho Y."/>
            <person name="Suzuki H."/>
            <person name="Kawai J."/>
            <person name="Hayashizaki Y."/>
        </authorList>
    </citation>
    <scope>NUCLEOTIDE SEQUENCE [LARGE SCALE MRNA] (ISOFORM 2)</scope>
    <source>
        <strain>C57BL/6J</strain>
        <tissue>Bone</tissue>
    </source>
</reference>
<reference key="4">
    <citation type="journal article" date="2004" name="Genome Res.">
        <title>The status, quality, and expansion of the NIH full-length cDNA project: the Mammalian Gene Collection (MGC).</title>
        <authorList>
            <consortium name="The MGC Project Team"/>
        </authorList>
    </citation>
    <scope>NUCLEOTIDE SEQUENCE [LARGE SCALE MRNA] (ISOFORM 2)</scope>
    <source>
        <tissue>Jaw</tissue>
        <tissue>Limb</tissue>
    </source>
</reference>
<reference key="5">
    <citation type="journal article" date="2010" name="Cell">
        <title>A tissue-specific atlas of mouse protein phosphorylation and expression.</title>
        <authorList>
            <person name="Huttlin E.L."/>
            <person name="Jedrychowski M.P."/>
            <person name="Elias J.E."/>
            <person name="Goswami T."/>
            <person name="Rad R."/>
            <person name="Beausoleil S.A."/>
            <person name="Villen J."/>
            <person name="Haas W."/>
            <person name="Sowa M.E."/>
            <person name="Gygi S.P."/>
        </authorList>
    </citation>
    <scope>PHOSPHORYLATION [LARGE SCALE ANALYSIS] AT SER-102</scope>
    <scope>IDENTIFICATION BY MASS SPECTROMETRY [LARGE SCALE ANALYSIS]</scope>
    <source>
        <tissue>Lung</tissue>
    </source>
</reference>
<reference key="6">
    <citation type="journal article" date="2013" name="Nat. Commun.">
        <title>Germinal centre protein HGAL promotes lymphoid hyperplasia and amyloidosis via BCR-mediated Syk activation.</title>
        <authorList>
            <person name="Romero-Camarero I."/>
            <person name="Jiang X."/>
            <person name="Natkunam Y."/>
            <person name="Lu X."/>
            <person name="Vicente-Duenas C."/>
            <person name="Gonzalez-Herrero I."/>
            <person name="Flores T."/>
            <person name="Garcia J.L."/>
            <person name="McNamara G."/>
            <person name="Kunder C."/>
            <person name="Zhao S."/>
            <person name="Segura V."/>
            <person name="Fontan L."/>
            <person name="Martinez-Climent J.A."/>
            <person name="Garcia-Criado F.J."/>
            <person name="Theis J.D."/>
            <person name="Dogan A."/>
            <person name="Campos-Sanchez E."/>
            <person name="Green M.R."/>
            <person name="Alizadeh A.A."/>
            <person name="Cobaleda C."/>
            <person name="Sanchez-Garcia I."/>
            <person name="Lossos I.S."/>
        </authorList>
    </citation>
    <scope>MISCELLANEOUS</scope>
</reference>
<protein>
    <recommendedName>
        <fullName>Germinal center-associated signaling and motility protein</fullName>
    </recommendedName>
    <alternativeName>
        <fullName>Germinal center B-cell-expressed transcript 2 protein</fullName>
    </alternativeName>
</protein>
<proteinExistence type="evidence at protein level"/>
<feature type="chain" id="PRO_0000256229" description="Germinal center-associated signaling and motility protein">
    <location>
        <begin position="1"/>
        <end position="181"/>
    </location>
</feature>
<feature type="region of interest" description="Disordered" evidence="3">
    <location>
        <begin position="117"/>
        <end position="181"/>
    </location>
</feature>
<feature type="compositionally biased region" description="Basic and acidic residues" evidence="3">
    <location>
        <begin position="117"/>
        <end position="128"/>
    </location>
</feature>
<feature type="modified residue" description="Phosphoserine" evidence="10">
    <location>
        <position position="102"/>
    </location>
</feature>
<feature type="modified residue" description="Phosphotyrosine" evidence="2">
    <location>
        <position position="150"/>
    </location>
</feature>
<feature type="splice variant" id="VSP_021334" description="In isoform 2." evidence="6 7 8">
    <location>
        <begin position="11"/>
        <end position="32"/>
    </location>
</feature>
<feature type="sequence conflict" description="In Ref. 3; BAC29474." evidence="9" ref="3">
    <original>S</original>
    <variation>L</variation>
    <location>
        <position position="102"/>
    </location>
</feature>